<organism>
    <name type="scientific">Homo sapiens</name>
    <name type="common">Human</name>
    <dbReference type="NCBI Taxonomy" id="9606"/>
    <lineage>
        <taxon>Eukaryota</taxon>
        <taxon>Metazoa</taxon>
        <taxon>Chordata</taxon>
        <taxon>Craniata</taxon>
        <taxon>Vertebrata</taxon>
        <taxon>Euteleostomi</taxon>
        <taxon>Mammalia</taxon>
        <taxon>Eutheria</taxon>
        <taxon>Euarchontoglires</taxon>
        <taxon>Primates</taxon>
        <taxon>Haplorrhini</taxon>
        <taxon>Catarrhini</taxon>
        <taxon>Hominidae</taxon>
        <taxon>Homo</taxon>
    </lineage>
</organism>
<name>M1IP1_HUMAN</name>
<gene>
    <name type="primary">MID1IP1</name>
    <name type="synonym">MIG12</name>
</gene>
<sequence length="183" mass="20202">MMQICDTYNQKHSLFNAMNRFIGAVNNMDQTVMVPSLLRDVPLADPGLDNDVGVEVGGSGGCLEERTPPVPDSGSANGSFFAPSRDMYSHYVLLKSIRNDIEWGVLHQPPPPAGSEEGSAWKSKDILVDLGHLEGADAGEEDLEQQFHYHLRGLHTVLSKLTRKANILTNRYKQEIGFGNWGH</sequence>
<evidence type="ECO:0000250" key="1"/>
<evidence type="ECO:0000250" key="2">
    <source>
        <dbReference type="UniProtKB" id="Q9CQ20"/>
    </source>
</evidence>
<evidence type="ECO:0000305" key="3"/>
<evidence type="ECO:0007744" key="4">
    <source>
    </source>
</evidence>
<evidence type="ECO:0007744" key="5">
    <source>
    </source>
</evidence>
<keyword id="KW-0007">Acetylation</keyword>
<keyword id="KW-0963">Cytoplasm</keyword>
<keyword id="KW-0206">Cytoskeleton</keyword>
<keyword id="KW-0444">Lipid biosynthesis</keyword>
<keyword id="KW-0443">Lipid metabolism</keyword>
<keyword id="KW-0493">Microtubule</keyword>
<keyword id="KW-0539">Nucleus</keyword>
<keyword id="KW-0597">Phosphoprotein</keyword>
<keyword id="KW-1267">Proteomics identification</keyword>
<keyword id="KW-1185">Reference proteome</keyword>
<accession>Q9NPA3</accession>
<accession>D3DWB2</accession>
<comment type="function">
    <text evidence="1">Plays a role in the regulation of lipogenesis in liver. Up-regulates ACACA enzyme activity. Required for efficient lipid biosynthesis, including triacylglycerol, diacylglycerol and phospholipid. Involved in stabilization of microtubules (By similarity).</text>
</comment>
<comment type="subunit">
    <text evidence="1">Homodimer in the absence of THRSP. Heterodimer with THRSP. The homodimer interacts with ACACA and ACACB. Promotes polymerization of Acetyl-CoA carboxylase to form complexes that contain MID1IP1 and ACACA and/or ACACB. Interaction with THRSP interferes with ACACA binding (By similarity).</text>
</comment>
<comment type="interaction">
    <interactant intactId="EBI-750096">
        <id>Q9NPA3</id>
    </interactant>
    <interactant intactId="EBI-8466265">
        <id>Q96MA6</id>
        <label>AK8</label>
    </interactant>
    <organismsDiffer>false</organismsDiffer>
    <experiments>3</experiments>
</comment>
<comment type="interaction">
    <interactant intactId="EBI-750096">
        <id>Q9NPA3</id>
    </interactant>
    <interactant intactId="EBI-10172526">
        <id>Q9UJV3-2</id>
        <label>MID2</label>
    </interactant>
    <organismsDiffer>false</organismsDiffer>
    <experiments>3</experiments>
</comment>
<comment type="interaction">
    <interactant intactId="EBI-750096">
        <id>Q9NPA3</id>
    </interactant>
    <interactant intactId="EBI-740595">
        <id>Q9UMX1</id>
        <label>SUFU</label>
    </interactant>
    <organismsDiffer>false</organismsDiffer>
    <experiments>3</experiments>
</comment>
<comment type="interaction">
    <interactant intactId="EBI-750096">
        <id>Q9NPA3</id>
    </interactant>
    <interactant intactId="EBI-13939599">
        <id>P16473</id>
        <label>TSHR</label>
    </interactant>
    <organismsDiffer>false</organismsDiffer>
    <experiments>2</experiments>
</comment>
<comment type="subcellular location">
    <subcellularLocation>
        <location evidence="2">Nucleus</location>
    </subcellularLocation>
    <subcellularLocation>
        <location evidence="2">Cytoplasm</location>
    </subcellularLocation>
    <subcellularLocation>
        <location evidence="2">Cytoplasm</location>
        <location evidence="2">Cytoskeleton</location>
    </subcellularLocation>
    <text evidence="2">Associated with microtubules.</text>
</comment>
<comment type="similarity">
    <text evidence="3">Belongs to the SPOT14 family.</text>
</comment>
<comment type="caution">
    <text evidence="3">It is uncertain whether Met-1 or Met-2 is the initiator.</text>
</comment>
<comment type="sequence caution" evidence="3">
    <conflict type="erroneous initiation">
        <sequence resource="EMBL-CDS" id="DAA01482"/>
    </conflict>
</comment>
<reference key="1">
    <citation type="submission" date="2000-02" db="EMBL/GenBank/DDBJ databases">
        <title>Full-length sequencing of some human and murine muscular transcripts (Telethon Italy project B41).</title>
        <authorList>
            <person name="Frigimelica E."/>
            <person name="Lanfranchi G."/>
        </authorList>
    </citation>
    <scope>NUCLEOTIDE SEQUENCE [MRNA]</scope>
    <source>
        <tissue>Skeletal muscle</tissue>
    </source>
</reference>
<reference key="2">
    <citation type="journal article" date="2004" name="Nat. Genet.">
        <title>Complete sequencing and characterization of 21,243 full-length human cDNAs.</title>
        <authorList>
            <person name="Ota T."/>
            <person name="Suzuki Y."/>
            <person name="Nishikawa T."/>
            <person name="Otsuki T."/>
            <person name="Sugiyama T."/>
            <person name="Irie R."/>
            <person name="Wakamatsu A."/>
            <person name="Hayashi K."/>
            <person name="Sato H."/>
            <person name="Nagai K."/>
            <person name="Kimura K."/>
            <person name="Makita H."/>
            <person name="Sekine M."/>
            <person name="Obayashi M."/>
            <person name="Nishi T."/>
            <person name="Shibahara T."/>
            <person name="Tanaka T."/>
            <person name="Ishii S."/>
            <person name="Yamamoto J."/>
            <person name="Saito K."/>
            <person name="Kawai Y."/>
            <person name="Isono Y."/>
            <person name="Nakamura Y."/>
            <person name="Nagahari K."/>
            <person name="Murakami K."/>
            <person name="Yasuda T."/>
            <person name="Iwayanagi T."/>
            <person name="Wagatsuma M."/>
            <person name="Shiratori A."/>
            <person name="Sudo H."/>
            <person name="Hosoiri T."/>
            <person name="Kaku Y."/>
            <person name="Kodaira H."/>
            <person name="Kondo H."/>
            <person name="Sugawara M."/>
            <person name="Takahashi M."/>
            <person name="Kanda K."/>
            <person name="Yokoi T."/>
            <person name="Furuya T."/>
            <person name="Kikkawa E."/>
            <person name="Omura Y."/>
            <person name="Abe K."/>
            <person name="Kamihara K."/>
            <person name="Katsuta N."/>
            <person name="Sato K."/>
            <person name="Tanikawa M."/>
            <person name="Yamazaki M."/>
            <person name="Ninomiya K."/>
            <person name="Ishibashi T."/>
            <person name="Yamashita H."/>
            <person name="Murakawa K."/>
            <person name="Fujimori K."/>
            <person name="Tanai H."/>
            <person name="Kimata M."/>
            <person name="Watanabe M."/>
            <person name="Hiraoka S."/>
            <person name="Chiba Y."/>
            <person name="Ishida S."/>
            <person name="Ono Y."/>
            <person name="Takiguchi S."/>
            <person name="Watanabe S."/>
            <person name="Yosida M."/>
            <person name="Hotuta T."/>
            <person name="Kusano J."/>
            <person name="Kanehori K."/>
            <person name="Takahashi-Fujii A."/>
            <person name="Hara H."/>
            <person name="Tanase T.-O."/>
            <person name="Nomura Y."/>
            <person name="Togiya S."/>
            <person name="Komai F."/>
            <person name="Hara R."/>
            <person name="Takeuchi K."/>
            <person name="Arita M."/>
            <person name="Imose N."/>
            <person name="Musashino K."/>
            <person name="Yuuki H."/>
            <person name="Oshima A."/>
            <person name="Sasaki N."/>
            <person name="Aotsuka S."/>
            <person name="Yoshikawa Y."/>
            <person name="Matsunawa H."/>
            <person name="Ichihara T."/>
            <person name="Shiohata N."/>
            <person name="Sano S."/>
            <person name="Moriya S."/>
            <person name="Momiyama H."/>
            <person name="Satoh N."/>
            <person name="Takami S."/>
            <person name="Terashima Y."/>
            <person name="Suzuki O."/>
            <person name="Nakagawa S."/>
            <person name="Senoh A."/>
            <person name="Mizoguchi H."/>
            <person name="Goto Y."/>
            <person name="Shimizu F."/>
            <person name="Wakebe H."/>
            <person name="Hishigaki H."/>
            <person name="Watanabe T."/>
            <person name="Sugiyama A."/>
            <person name="Takemoto M."/>
            <person name="Kawakami B."/>
            <person name="Yamazaki M."/>
            <person name="Watanabe K."/>
            <person name="Kumagai A."/>
            <person name="Itakura S."/>
            <person name="Fukuzumi Y."/>
            <person name="Fujimori Y."/>
            <person name="Komiyama M."/>
            <person name="Tashiro H."/>
            <person name="Tanigami A."/>
            <person name="Fujiwara T."/>
            <person name="Ono T."/>
            <person name="Yamada K."/>
            <person name="Fujii Y."/>
            <person name="Ozaki K."/>
            <person name="Hirao M."/>
            <person name="Ohmori Y."/>
            <person name="Kawabata A."/>
            <person name="Hikiji T."/>
            <person name="Kobatake N."/>
            <person name="Inagaki H."/>
            <person name="Ikema Y."/>
            <person name="Okamoto S."/>
            <person name="Okitani R."/>
            <person name="Kawakami T."/>
            <person name="Noguchi S."/>
            <person name="Itoh T."/>
            <person name="Shigeta K."/>
            <person name="Senba T."/>
            <person name="Matsumura K."/>
            <person name="Nakajima Y."/>
            <person name="Mizuno T."/>
            <person name="Morinaga M."/>
            <person name="Sasaki M."/>
            <person name="Togashi T."/>
            <person name="Oyama M."/>
            <person name="Hata H."/>
            <person name="Watanabe M."/>
            <person name="Komatsu T."/>
            <person name="Mizushima-Sugano J."/>
            <person name="Satoh T."/>
            <person name="Shirai Y."/>
            <person name="Takahashi Y."/>
            <person name="Nakagawa K."/>
            <person name="Okumura K."/>
            <person name="Nagase T."/>
            <person name="Nomura N."/>
            <person name="Kikuchi H."/>
            <person name="Masuho Y."/>
            <person name="Yamashita R."/>
            <person name="Nakai K."/>
            <person name="Yada T."/>
            <person name="Nakamura Y."/>
            <person name="Ohara O."/>
            <person name="Isogai T."/>
            <person name="Sugano S."/>
        </authorList>
    </citation>
    <scope>NUCLEOTIDE SEQUENCE [LARGE SCALE MRNA]</scope>
</reference>
<reference key="3">
    <citation type="submission" date="2004-06" db="EMBL/GenBank/DDBJ databases">
        <title>Cloning of human full open reading frames in Gateway(TM) system entry vector (pDONR201).</title>
        <authorList>
            <person name="Ebert L."/>
            <person name="Schick M."/>
            <person name="Neubert P."/>
            <person name="Schatten R."/>
            <person name="Henze S."/>
            <person name="Korn B."/>
        </authorList>
    </citation>
    <scope>NUCLEOTIDE SEQUENCE [LARGE SCALE MRNA]</scope>
</reference>
<reference key="4">
    <citation type="submission" date="2005-09" db="EMBL/GenBank/DDBJ databases">
        <authorList>
            <person name="Mural R.J."/>
            <person name="Istrail S."/>
            <person name="Sutton G.G."/>
            <person name="Florea L."/>
            <person name="Halpern A.L."/>
            <person name="Mobarry C.M."/>
            <person name="Lippert R."/>
            <person name="Walenz B."/>
            <person name="Shatkay H."/>
            <person name="Dew I."/>
            <person name="Miller J.R."/>
            <person name="Flanigan M.J."/>
            <person name="Edwards N.J."/>
            <person name="Bolanos R."/>
            <person name="Fasulo D."/>
            <person name="Halldorsson B.V."/>
            <person name="Hannenhalli S."/>
            <person name="Turner R."/>
            <person name="Yooseph S."/>
            <person name="Lu F."/>
            <person name="Nusskern D.R."/>
            <person name="Shue B.C."/>
            <person name="Zheng X.H."/>
            <person name="Zhong F."/>
            <person name="Delcher A.L."/>
            <person name="Huson D.H."/>
            <person name="Kravitz S.A."/>
            <person name="Mouchard L."/>
            <person name="Reinert K."/>
            <person name="Remington K.A."/>
            <person name="Clark A.G."/>
            <person name="Waterman M.S."/>
            <person name="Eichler E.E."/>
            <person name="Adams M.D."/>
            <person name="Hunkapiller M.W."/>
            <person name="Myers E.W."/>
            <person name="Venter J.C."/>
        </authorList>
    </citation>
    <scope>NUCLEOTIDE SEQUENCE [LARGE SCALE GENOMIC DNA]</scope>
</reference>
<reference key="5">
    <citation type="journal article" date="2004" name="Genome Res.">
        <title>The status, quality, and expansion of the NIH full-length cDNA project: the Mammalian Gene Collection (MGC).</title>
        <authorList>
            <consortium name="The MGC Project Team"/>
        </authorList>
    </citation>
    <scope>NUCLEOTIDE SEQUENCE [LARGE SCALE MRNA]</scope>
    <source>
        <tissue>Lymph</tissue>
        <tissue>Placenta</tissue>
    </source>
</reference>
<reference key="6">
    <citation type="journal article" date="2004" name="BMC Cell Biol.">
        <title>Mig12, a novel Opitz syndrome gene product partner, is expressed in the embryonic ventral midline and co-operates with Mid1 to bundle and stabilize microtubules.</title>
        <authorList>
            <person name="Berti C."/>
            <person name="Fontanella B."/>
            <person name="Ferrentino R."/>
            <person name="Meroni G."/>
        </authorList>
    </citation>
    <scope>IDENTIFICATION</scope>
</reference>
<reference key="7">
    <citation type="journal article" date="2009" name="Anal. Chem.">
        <title>Lys-N and trypsin cover complementary parts of the phosphoproteome in a refined SCX-based approach.</title>
        <authorList>
            <person name="Gauci S."/>
            <person name="Helbig A.O."/>
            <person name="Slijper M."/>
            <person name="Krijgsveld J."/>
            <person name="Heck A.J."/>
            <person name="Mohammed S."/>
        </authorList>
    </citation>
    <scope>ACETYLATION [LARGE SCALE ANALYSIS] AT MET-1</scope>
    <scope>IDENTIFICATION BY MASS SPECTROMETRY [LARGE SCALE ANALYSIS]</scope>
</reference>
<reference key="8">
    <citation type="journal article" date="2013" name="J. Proteome Res.">
        <title>Toward a comprehensive characterization of a human cancer cell phosphoproteome.</title>
        <authorList>
            <person name="Zhou H."/>
            <person name="Di Palma S."/>
            <person name="Preisinger C."/>
            <person name="Peng M."/>
            <person name="Polat A.N."/>
            <person name="Heck A.J."/>
            <person name="Mohammed S."/>
        </authorList>
    </citation>
    <scope>PHOSPHORYLATION [LARGE SCALE ANALYSIS] AT SER-75 AND SER-79</scope>
    <scope>IDENTIFICATION BY MASS SPECTROMETRY [LARGE SCALE ANALYSIS]</scope>
    <source>
        <tissue>Cervix carcinoma</tissue>
        <tissue>Erythroleukemia</tissue>
    </source>
</reference>
<feature type="chain" id="PRO_0000123777" description="Mid1-interacting protein 1">
    <location>
        <begin position="1"/>
        <end position="183"/>
    </location>
</feature>
<feature type="modified residue" description="N-acetylmethionine" evidence="4">
    <location>
        <position position="1"/>
    </location>
</feature>
<feature type="modified residue" description="Phosphoserine" evidence="5">
    <location>
        <position position="75"/>
    </location>
</feature>
<feature type="modified residue" description="Phosphoserine" evidence="5">
    <location>
        <position position="79"/>
    </location>
</feature>
<dbReference type="EMBL" id="AJ272057">
    <property type="protein sequence ID" value="CAB89113.1"/>
    <property type="molecule type" value="mRNA"/>
</dbReference>
<dbReference type="EMBL" id="AK001248">
    <property type="protein sequence ID" value="BAA91580.1"/>
    <property type="molecule type" value="mRNA"/>
</dbReference>
<dbReference type="EMBL" id="CR457220">
    <property type="protein sequence ID" value="CAG33501.1"/>
    <property type="molecule type" value="mRNA"/>
</dbReference>
<dbReference type="EMBL" id="CH471141">
    <property type="protein sequence ID" value="EAW59435.1"/>
    <property type="molecule type" value="Genomic_DNA"/>
</dbReference>
<dbReference type="EMBL" id="CH471141">
    <property type="protein sequence ID" value="EAW59436.1"/>
    <property type="molecule type" value="Genomic_DNA"/>
</dbReference>
<dbReference type="EMBL" id="BC008908">
    <property type="protein sequence ID" value="AAH08908.1"/>
    <property type="molecule type" value="mRNA"/>
</dbReference>
<dbReference type="EMBL" id="BC019332">
    <property type="protein sequence ID" value="AAH19332.1"/>
    <property type="molecule type" value="mRNA"/>
</dbReference>
<dbReference type="EMBL" id="BK001260">
    <property type="protein sequence ID" value="DAA01482.1"/>
    <property type="status" value="ALT_INIT"/>
    <property type="molecule type" value="mRNA"/>
</dbReference>
<dbReference type="CCDS" id="CCDS14249.1"/>
<dbReference type="RefSeq" id="NP_001092260.1">
    <property type="nucleotide sequence ID" value="NM_001098790.2"/>
</dbReference>
<dbReference type="RefSeq" id="NP_001092261.1">
    <property type="nucleotide sequence ID" value="NM_001098791.2"/>
</dbReference>
<dbReference type="RefSeq" id="NP_067065.1">
    <property type="nucleotide sequence ID" value="NM_021242.6"/>
</dbReference>
<dbReference type="SMR" id="Q9NPA3"/>
<dbReference type="BioGRID" id="121846">
    <property type="interactions" value="72"/>
</dbReference>
<dbReference type="FunCoup" id="Q9NPA3">
    <property type="interactions" value="633"/>
</dbReference>
<dbReference type="IntAct" id="Q9NPA3">
    <property type="interactions" value="65"/>
</dbReference>
<dbReference type="MINT" id="Q9NPA3"/>
<dbReference type="STRING" id="9606.ENSP00000483547"/>
<dbReference type="GlyGen" id="Q9NPA3">
    <property type="glycosylation" value="1 site, 1 O-linked glycan (1 site)"/>
</dbReference>
<dbReference type="iPTMnet" id="Q9NPA3"/>
<dbReference type="PhosphoSitePlus" id="Q9NPA3"/>
<dbReference type="BioMuta" id="MID1IP1"/>
<dbReference type="DMDM" id="21759081"/>
<dbReference type="jPOST" id="Q9NPA3"/>
<dbReference type="MassIVE" id="Q9NPA3"/>
<dbReference type="PaxDb" id="9606-ENSP00000483547"/>
<dbReference type="PeptideAtlas" id="Q9NPA3"/>
<dbReference type="ProteomicsDB" id="81950"/>
<dbReference type="Pumba" id="Q9NPA3"/>
<dbReference type="Antibodypedia" id="24940">
    <property type="antibodies" value="176 antibodies from 32 providers"/>
</dbReference>
<dbReference type="DNASU" id="58526"/>
<dbReference type="Ensembl" id="ENST00000336949.7">
    <property type="protein sequence ID" value="ENSP00000338706.6"/>
    <property type="gene ID" value="ENSG00000165175.17"/>
</dbReference>
<dbReference type="Ensembl" id="ENST00000378474.3">
    <property type="protein sequence ID" value="ENSP00000367735.3"/>
    <property type="gene ID" value="ENSG00000165175.17"/>
</dbReference>
<dbReference type="Ensembl" id="ENST00000457894.5">
    <property type="protein sequence ID" value="ENSP00000416670.1"/>
    <property type="gene ID" value="ENSG00000165175.17"/>
</dbReference>
<dbReference type="Ensembl" id="ENST00000614558.3">
    <property type="protein sequence ID" value="ENSP00000483547.1"/>
    <property type="gene ID" value="ENSG00000165175.17"/>
</dbReference>
<dbReference type="GeneID" id="58526"/>
<dbReference type="KEGG" id="hsa:58526"/>
<dbReference type="MANE-Select" id="ENST00000614558.3">
    <property type="protein sequence ID" value="ENSP00000483547.1"/>
    <property type="RefSeq nucleotide sequence ID" value="NM_021242.6"/>
    <property type="RefSeq protein sequence ID" value="NP_067065.1"/>
</dbReference>
<dbReference type="UCSC" id="uc004dei.5">
    <property type="organism name" value="human"/>
</dbReference>
<dbReference type="AGR" id="HGNC:20715"/>
<dbReference type="CTD" id="58526"/>
<dbReference type="DisGeNET" id="58526"/>
<dbReference type="GeneCards" id="MID1IP1"/>
<dbReference type="HGNC" id="HGNC:20715">
    <property type="gene designation" value="MID1IP1"/>
</dbReference>
<dbReference type="HPA" id="ENSG00000165175">
    <property type="expression patterns" value="Tissue enhanced (brain, skeletal muscle)"/>
</dbReference>
<dbReference type="MIM" id="300961">
    <property type="type" value="gene"/>
</dbReference>
<dbReference type="neXtProt" id="NX_Q9NPA3"/>
<dbReference type="OpenTargets" id="ENSG00000165175"/>
<dbReference type="PharmGKB" id="PA134941916"/>
<dbReference type="VEuPathDB" id="HostDB:ENSG00000165175"/>
<dbReference type="eggNOG" id="ENOG502S0KR">
    <property type="taxonomic scope" value="Eukaryota"/>
</dbReference>
<dbReference type="GeneTree" id="ENSGT00500000044890"/>
<dbReference type="HOGENOM" id="CLU_066079_1_0_1"/>
<dbReference type="InParanoid" id="Q9NPA3"/>
<dbReference type="OMA" id="EEGNAWK"/>
<dbReference type="OrthoDB" id="5951908at2759"/>
<dbReference type="PAN-GO" id="Q9NPA3">
    <property type="GO annotations" value="2 GO annotations based on evolutionary models"/>
</dbReference>
<dbReference type="PhylomeDB" id="Q9NPA3"/>
<dbReference type="TreeFam" id="TF326826"/>
<dbReference type="PathwayCommons" id="Q9NPA3"/>
<dbReference type="Reactome" id="R-HSA-200425">
    <property type="pathway name" value="Carnitine shuttle"/>
</dbReference>
<dbReference type="SignaLink" id="Q9NPA3"/>
<dbReference type="SIGNOR" id="Q9NPA3"/>
<dbReference type="BioGRID-ORCS" id="58526">
    <property type="hits" value="16 hits in 785 CRISPR screens"/>
</dbReference>
<dbReference type="ChiTaRS" id="MID1IP1">
    <property type="organism name" value="human"/>
</dbReference>
<dbReference type="GenomeRNAi" id="58526"/>
<dbReference type="Pharos" id="Q9NPA3">
    <property type="development level" value="Tbio"/>
</dbReference>
<dbReference type="PRO" id="PR:Q9NPA3"/>
<dbReference type="Proteomes" id="UP000005640">
    <property type="component" value="Chromosome X"/>
</dbReference>
<dbReference type="RNAct" id="Q9NPA3">
    <property type="molecule type" value="protein"/>
</dbReference>
<dbReference type="Bgee" id="ENSG00000165175">
    <property type="expression patterns" value="Expressed in C1 segment of cervical spinal cord and 186 other cell types or tissues"/>
</dbReference>
<dbReference type="GO" id="GO:0005829">
    <property type="term" value="C:cytosol"/>
    <property type="evidence" value="ECO:0000250"/>
    <property type="project" value="UniProtKB"/>
</dbReference>
<dbReference type="GO" id="GO:0005874">
    <property type="term" value="C:microtubule"/>
    <property type="evidence" value="ECO:0007669"/>
    <property type="project" value="UniProtKB-KW"/>
</dbReference>
<dbReference type="GO" id="GO:0015630">
    <property type="term" value="C:microtubule cytoskeleton"/>
    <property type="evidence" value="ECO:0000250"/>
    <property type="project" value="UniProtKB"/>
</dbReference>
<dbReference type="GO" id="GO:0005634">
    <property type="term" value="C:nucleus"/>
    <property type="evidence" value="ECO:0007669"/>
    <property type="project" value="UniProtKB-SubCell"/>
</dbReference>
<dbReference type="GO" id="GO:0008047">
    <property type="term" value="F:enzyme activator activity"/>
    <property type="evidence" value="ECO:0007669"/>
    <property type="project" value="Ensembl"/>
</dbReference>
<dbReference type="GO" id="GO:0042802">
    <property type="term" value="F:identical protein binding"/>
    <property type="evidence" value="ECO:0007669"/>
    <property type="project" value="Ensembl"/>
</dbReference>
<dbReference type="GO" id="GO:0055103">
    <property type="term" value="F:ligase regulator activity"/>
    <property type="evidence" value="ECO:0007669"/>
    <property type="project" value="Ensembl"/>
</dbReference>
<dbReference type="GO" id="GO:0006629">
    <property type="term" value="P:lipid metabolic process"/>
    <property type="evidence" value="ECO:0007669"/>
    <property type="project" value="UniProtKB-KW"/>
</dbReference>
<dbReference type="GO" id="GO:0007026">
    <property type="term" value="P:negative regulation of microtubule depolymerization"/>
    <property type="evidence" value="ECO:0000250"/>
    <property type="project" value="UniProtKB"/>
</dbReference>
<dbReference type="GO" id="GO:0045723">
    <property type="term" value="P:positive regulation of fatty acid biosynthetic process"/>
    <property type="evidence" value="ECO:0000250"/>
    <property type="project" value="UniProtKB"/>
</dbReference>
<dbReference type="GO" id="GO:0051351">
    <property type="term" value="P:positive regulation of ligase activity"/>
    <property type="evidence" value="ECO:0000250"/>
    <property type="project" value="UniProtKB"/>
</dbReference>
<dbReference type="GO" id="GO:0051258">
    <property type="term" value="P:protein polymerization"/>
    <property type="evidence" value="ECO:0000250"/>
    <property type="project" value="UniProtKB"/>
</dbReference>
<dbReference type="GO" id="GO:0046890">
    <property type="term" value="P:regulation of lipid biosynthetic process"/>
    <property type="evidence" value="ECO:0000250"/>
    <property type="project" value="UniProtKB"/>
</dbReference>
<dbReference type="Gene3D" id="6.10.140.1610">
    <property type="match status" value="1"/>
</dbReference>
<dbReference type="InterPro" id="IPR053719">
    <property type="entry name" value="Lipogen_MT_Stabilize_sf"/>
</dbReference>
<dbReference type="InterPro" id="IPR009786">
    <property type="entry name" value="Spot_14"/>
</dbReference>
<dbReference type="PANTHER" id="PTHR14315:SF16">
    <property type="entry name" value="MID1-INTERACTING PROTEIN 1"/>
    <property type="match status" value="1"/>
</dbReference>
<dbReference type="PANTHER" id="PTHR14315">
    <property type="entry name" value="SPOT14 FAMILY MEMBER"/>
    <property type="match status" value="1"/>
</dbReference>
<dbReference type="Pfam" id="PF07084">
    <property type="entry name" value="Spot_14"/>
    <property type="match status" value="1"/>
</dbReference>
<protein>
    <recommendedName>
        <fullName>Mid1-interacting protein 1</fullName>
    </recommendedName>
    <alternativeName>
        <fullName>Gastrulation-specific G12-like protein</fullName>
    </alternativeName>
    <alternativeName>
        <fullName>Mid1-interacting G12-like protein</fullName>
    </alternativeName>
    <alternativeName>
        <fullName>Protein STRAIT11499</fullName>
    </alternativeName>
    <alternativeName>
        <fullName>Spot 14-related protein</fullName>
        <shortName>S14R</shortName>
        <shortName>Spot 14-R</shortName>
    </alternativeName>
</protein>
<proteinExistence type="evidence at protein level"/>